<keyword id="KW-0031">Aminopeptidase</keyword>
<keyword id="KW-0378">Hydrolase</keyword>
<keyword id="KW-0479">Metal-binding</keyword>
<keyword id="KW-0482">Metalloprotease</keyword>
<keyword id="KW-0645">Protease</keyword>
<keyword id="KW-1185">Reference proteome</keyword>
<keyword id="KW-0862">Zinc</keyword>
<name>AMP11_ENCCU</name>
<gene>
    <name type="ordered locus">ECU01_0140</name>
</gene>
<gene>
    <name type="ordered locus">ECU01_1470</name>
</gene>
<feature type="chain" id="PRO_0000095101" description="Probable M1 family aminopeptidase 1">
    <location>
        <begin position="1"/>
        <end position="864"/>
    </location>
</feature>
<feature type="active site" description="Proton acceptor" evidence="2">
    <location>
        <position position="326"/>
    </location>
</feature>
<feature type="binding site" evidence="1">
    <location>
        <position position="149"/>
    </location>
    <ligand>
        <name>substrate</name>
    </ligand>
</feature>
<feature type="binding site" evidence="1">
    <location>
        <begin position="289"/>
        <end position="293"/>
    </location>
    <ligand>
        <name>substrate</name>
    </ligand>
</feature>
<feature type="binding site" evidence="2">
    <location>
        <position position="325"/>
    </location>
    <ligand>
        <name>Zn(2+)</name>
        <dbReference type="ChEBI" id="CHEBI:29105"/>
        <note>catalytic</note>
    </ligand>
</feature>
<feature type="binding site" evidence="2">
    <location>
        <position position="329"/>
    </location>
    <ligand>
        <name>Zn(2+)</name>
        <dbReference type="ChEBI" id="CHEBI:29105"/>
        <note>catalytic</note>
    </ligand>
</feature>
<feature type="binding site" evidence="2">
    <location>
        <position position="348"/>
    </location>
    <ligand>
        <name>Zn(2+)</name>
        <dbReference type="ChEBI" id="CHEBI:29105"/>
        <note>catalytic</note>
    </ligand>
</feature>
<feature type="site" description="Transition state stabilizer" evidence="1">
    <location>
        <position position="413"/>
    </location>
</feature>
<feature type="sequence conflict" description="In Ref. 1; CAA06646." evidence="3" ref="1">
    <original>YKN</original>
    <variation>HKY</variation>
    <location>
        <begin position="720"/>
        <end position="722"/>
    </location>
</feature>
<organism>
    <name type="scientific">Encephalitozoon cuniculi (strain GB-M1)</name>
    <name type="common">Microsporidian parasite</name>
    <dbReference type="NCBI Taxonomy" id="284813"/>
    <lineage>
        <taxon>Eukaryota</taxon>
        <taxon>Fungi</taxon>
        <taxon>Fungi incertae sedis</taxon>
        <taxon>Microsporidia</taxon>
        <taxon>Unikaryonidae</taxon>
        <taxon>Encephalitozoon</taxon>
    </lineage>
</organism>
<accession>Q8SQI6</accession>
<accession>O62582</accession>
<evidence type="ECO:0000250" key="1"/>
<evidence type="ECO:0000255" key="2">
    <source>
        <dbReference type="PROSITE-ProRule" id="PRU10095"/>
    </source>
</evidence>
<evidence type="ECO:0000305" key="3"/>
<sequence length="864" mass="97364">MRWIKVMAGLLPMIGSKGADEKDSSQQRRLSRVVVPEHYDLHVKILDAGFCGSVGIRVMISQDVSEIVLNAKELEIRDAGIVVEGARIPGRVVVGEAEKELEVVRIVFPSSLRAGPGYLTMEFCGDYSNGLVGLYKSGGPKEVYSTHFEPTDARRAFPCFDQPDMKATFKISIDAGSKFTVLANTQAIPSLREEYGDRKIEYFEETCKMSTYLVAFVVGELSYIEDWSKDGVRLRVYGDSSEVEWGRYGLEVGKRCLEYFSEYFGVGYEFPRAGSAKIDMVGIPNFSSGAMENWGLITFRRESLLYVPGKSNVEDMKNVAGTVCHELGHMWFGNLVTMSWWDDLWLNEGFATWVSFKGMENIGSVVSWDVWGEFVLWNVVRGMVDDGLGKSHQIRMNVTDPGEIGEIFDSISYCKGASVIRMIERYVGESVFMLGIRRYIKEHMYGNGNAMSLWKAIGEEYGEDISEMVEGWISQAGYPVVSVQDCGSSLVLSQSRYSMLGKSDDSLWTIPVVVSWEGKGQERIELRGRETTVRKRSSVYKVNAEYGGFYRVLYDSAGLSGLESRIDSLSVVDRVNVIEDVFGLGFGLYGGLEHGLRRISEYYSDSYHVARSGIEKLLRLRSVFYDDAEIVSLIDKKVRKMILPCVGRIDVFDIGTSVESVSMNKYVLSVGVEVGIREAVEKVQELWRRHVEAGEELGELRWIVYKAVVDENLGYMMDKYKNGDTPGMRREVMNGFSGIKREENFLDVVGNLSQFSVEDIGVVIGSISRGGAFRDAMVEYVVSHGEELYLMVHKNAMLYNMIIMSLRHVSGDLIVEKVERFLSGIKHSGSNLSIEKVRNEIQWRRRMRGIREEVLRGLLPEAEK</sequence>
<protein>
    <recommendedName>
        <fullName>Probable M1 family aminopeptidase 1</fullName>
        <ecNumber>3.4.11.-</ecNumber>
    </recommendedName>
</protein>
<comment type="cofactor">
    <cofactor evidence="1">
        <name>Zn(2+)</name>
        <dbReference type="ChEBI" id="CHEBI:29105"/>
    </cofactor>
    <text evidence="1">Binds 1 zinc ion per subunit.</text>
</comment>
<comment type="similarity">
    <text evidence="3">Belongs to the peptidase M1 family.</text>
</comment>
<dbReference type="EC" id="3.4.11.-"/>
<dbReference type="EMBL" id="AJ005644">
    <property type="protein sequence ID" value="CAA06646.1"/>
    <property type="molecule type" value="Genomic_DNA"/>
</dbReference>
<dbReference type="EMBL" id="AL391737">
    <property type="protein sequence ID" value="CAD24886.1"/>
    <property type="molecule type" value="Genomic_DNA"/>
</dbReference>
<dbReference type="EMBL" id="AL391737">
    <property type="protein sequence ID" value="CAD25018.1"/>
    <property type="molecule type" value="Genomic_DNA"/>
</dbReference>
<dbReference type="RefSeq" id="NP_001402102.1">
    <property type="nucleotide sequence ID" value="NM_001415215.1"/>
</dbReference>
<dbReference type="RefSeq" id="XP_965851.1">
    <property type="nucleotide sequence ID" value="XM_960758.1"/>
</dbReference>
<dbReference type="RefSeq" id="XP_965983.1">
    <property type="nucleotide sequence ID" value="XM_960890.1"/>
</dbReference>
<dbReference type="SMR" id="Q8SQI6"/>
<dbReference type="FunCoup" id="Q8SQI6">
    <property type="interactions" value="160"/>
</dbReference>
<dbReference type="STRING" id="284813.Q8SQI6"/>
<dbReference type="GeneID" id="860187"/>
<dbReference type="VEuPathDB" id="MicrosporidiaDB:ECU01_0140"/>
<dbReference type="VEuPathDB" id="MicrosporidiaDB:ECU01_1470"/>
<dbReference type="HOGENOM" id="CLU_003705_2_3_1"/>
<dbReference type="InParanoid" id="Q8SQI6"/>
<dbReference type="OMA" id="SHAIELW"/>
<dbReference type="OrthoDB" id="10031169at2759"/>
<dbReference type="Proteomes" id="UP000000819">
    <property type="component" value="Chromosome I"/>
</dbReference>
<dbReference type="GO" id="GO:0005737">
    <property type="term" value="C:cytoplasm"/>
    <property type="evidence" value="ECO:0007669"/>
    <property type="project" value="TreeGrafter"/>
</dbReference>
<dbReference type="GO" id="GO:0005615">
    <property type="term" value="C:extracellular space"/>
    <property type="evidence" value="ECO:0007669"/>
    <property type="project" value="TreeGrafter"/>
</dbReference>
<dbReference type="GO" id="GO:0016020">
    <property type="term" value="C:membrane"/>
    <property type="evidence" value="ECO:0007669"/>
    <property type="project" value="TreeGrafter"/>
</dbReference>
<dbReference type="GO" id="GO:0070006">
    <property type="term" value="F:metalloaminopeptidase activity"/>
    <property type="evidence" value="ECO:0007669"/>
    <property type="project" value="TreeGrafter"/>
</dbReference>
<dbReference type="GO" id="GO:0042277">
    <property type="term" value="F:peptide binding"/>
    <property type="evidence" value="ECO:0007669"/>
    <property type="project" value="TreeGrafter"/>
</dbReference>
<dbReference type="GO" id="GO:0008270">
    <property type="term" value="F:zinc ion binding"/>
    <property type="evidence" value="ECO:0007669"/>
    <property type="project" value="InterPro"/>
</dbReference>
<dbReference type="GO" id="GO:0043171">
    <property type="term" value="P:peptide catabolic process"/>
    <property type="evidence" value="ECO:0007669"/>
    <property type="project" value="TreeGrafter"/>
</dbReference>
<dbReference type="GO" id="GO:0006508">
    <property type="term" value="P:proteolysis"/>
    <property type="evidence" value="ECO:0007669"/>
    <property type="project" value="UniProtKB-KW"/>
</dbReference>
<dbReference type="CDD" id="cd09601">
    <property type="entry name" value="M1_APN-Q_like"/>
    <property type="match status" value="1"/>
</dbReference>
<dbReference type="FunFam" id="1.10.390.10:FF:000006">
    <property type="entry name" value="Puromycin-sensitive aminopeptidase"/>
    <property type="match status" value="1"/>
</dbReference>
<dbReference type="Gene3D" id="1.25.50.20">
    <property type="match status" value="1"/>
</dbReference>
<dbReference type="Gene3D" id="2.60.40.1910">
    <property type="match status" value="1"/>
</dbReference>
<dbReference type="Gene3D" id="1.10.390.10">
    <property type="entry name" value="Neutral Protease Domain 2"/>
    <property type="match status" value="1"/>
</dbReference>
<dbReference type="Gene3D" id="2.60.40.1730">
    <property type="entry name" value="tricorn interacting facor f3 domain"/>
    <property type="match status" value="1"/>
</dbReference>
<dbReference type="InterPro" id="IPR045357">
    <property type="entry name" value="Aminopeptidase_N-like_N"/>
</dbReference>
<dbReference type="InterPro" id="IPR042097">
    <property type="entry name" value="Aminopeptidase_N-like_N_sf"/>
</dbReference>
<dbReference type="InterPro" id="IPR024571">
    <property type="entry name" value="ERAP1-like_C_dom"/>
</dbReference>
<dbReference type="InterPro" id="IPR034016">
    <property type="entry name" value="M1_APN-typ"/>
</dbReference>
<dbReference type="InterPro" id="IPR001930">
    <property type="entry name" value="Peptidase_M1"/>
</dbReference>
<dbReference type="InterPro" id="IPR050344">
    <property type="entry name" value="Peptidase_M1_aminopeptidases"/>
</dbReference>
<dbReference type="InterPro" id="IPR014782">
    <property type="entry name" value="Peptidase_M1_dom"/>
</dbReference>
<dbReference type="InterPro" id="IPR027268">
    <property type="entry name" value="Peptidase_M4/M1_CTD_sf"/>
</dbReference>
<dbReference type="PANTHER" id="PTHR11533">
    <property type="entry name" value="PROTEASE M1 ZINC METALLOPROTEASE"/>
    <property type="match status" value="1"/>
</dbReference>
<dbReference type="PANTHER" id="PTHR11533:SF174">
    <property type="entry name" value="PUROMYCIN-SENSITIVE AMINOPEPTIDASE-RELATED"/>
    <property type="match status" value="1"/>
</dbReference>
<dbReference type="Pfam" id="PF11838">
    <property type="entry name" value="ERAP1_C"/>
    <property type="match status" value="1"/>
</dbReference>
<dbReference type="Pfam" id="PF01433">
    <property type="entry name" value="Peptidase_M1"/>
    <property type="match status" value="1"/>
</dbReference>
<dbReference type="Pfam" id="PF17900">
    <property type="entry name" value="Peptidase_M1_N"/>
    <property type="match status" value="1"/>
</dbReference>
<dbReference type="PRINTS" id="PR00756">
    <property type="entry name" value="ALADIPTASE"/>
</dbReference>
<dbReference type="SUPFAM" id="SSF63737">
    <property type="entry name" value="Leukotriene A4 hydrolase N-terminal domain"/>
    <property type="match status" value="1"/>
</dbReference>
<dbReference type="SUPFAM" id="SSF55486">
    <property type="entry name" value="Metalloproteases ('zincins'), catalytic domain"/>
    <property type="match status" value="1"/>
</dbReference>
<dbReference type="PROSITE" id="PS00142">
    <property type="entry name" value="ZINC_PROTEASE"/>
    <property type="match status" value="1"/>
</dbReference>
<proteinExistence type="inferred from homology"/>
<reference key="1">
    <citation type="journal article" date="1998" name="Microb. Comp. Genomics">
        <title>First report on the systematic sequencing of the small genome of Encephalitozoon cuniculi (Protozoa, Microspora): gene organization of a 4.3 kbp region on chromosome I.</title>
        <authorList>
            <person name="Duffieux F."/>
            <person name="Peyret P."/>
            <person name="Roe B.A."/>
            <person name="Vivares C.P."/>
        </authorList>
    </citation>
    <scope>NUCLEOTIDE SEQUENCE [GENOMIC DNA]</scope>
</reference>
<reference key="2">
    <citation type="journal article" date="2001" name="Genome Res.">
        <title>Sequence and analysis of chromosome I of the amitochondriate intracellular parasite Encephalitozoon cuniculi (Microspora).</title>
        <authorList>
            <person name="Peyret P."/>
            <person name="Katinka M.D."/>
            <person name="Duprat S."/>
            <person name="Duffieux F."/>
            <person name="Barbe V."/>
            <person name="Barbazanges M."/>
            <person name="Weissenbach J."/>
            <person name="Saurin W."/>
            <person name="Vivares C.P."/>
        </authorList>
    </citation>
    <scope>NUCLEOTIDE SEQUENCE [LARGE SCALE GENOMIC DNA]</scope>
    <source>
        <strain>GB-M1</strain>
    </source>
</reference>
<reference key="3">
    <citation type="journal article" date="2001" name="Nature">
        <title>Genome sequence and gene compaction of the eukaryote parasite Encephalitozoon cuniculi.</title>
        <authorList>
            <person name="Katinka M.D."/>
            <person name="Duprat S."/>
            <person name="Cornillot E."/>
            <person name="Metenier G."/>
            <person name="Thomarat F."/>
            <person name="Prensier G."/>
            <person name="Barbe V."/>
            <person name="Peyretaillade E."/>
            <person name="Brottier P."/>
            <person name="Wincker P."/>
            <person name="Delbac F."/>
            <person name="El Alaoui H."/>
            <person name="Peyret P."/>
            <person name="Saurin W."/>
            <person name="Gouy M."/>
            <person name="Weissenbach J."/>
            <person name="Vivares C.P."/>
        </authorList>
    </citation>
    <scope>NUCLEOTIDE SEQUENCE [LARGE SCALE GENOMIC DNA]</scope>
    <source>
        <strain>GB-M1</strain>
    </source>
</reference>